<gene>
    <name type="primary">CPE</name>
</gene>
<accession>P16870</accession>
<accession>A8K4N1</accession>
<accession>B3KR42</accession>
<accession>B4DFN4</accession>
<accession>D3DP33</accession>
<accession>Q9UIU9</accession>
<name>CBPE_HUMAN</name>
<keyword id="KW-0025">Alternative splicing</keyword>
<keyword id="KW-0121">Carboxypeptidase</keyword>
<keyword id="KW-0165">Cleavage on pair of basic residues</keyword>
<keyword id="KW-0968">Cytoplasmic vesicle</keyword>
<keyword id="KW-0225">Disease variant</keyword>
<keyword id="KW-0325">Glycoprotein</keyword>
<keyword id="KW-0378">Hydrolase</keyword>
<keyword id="KW-1016">Hypogonadotropic hypogonadism</keyword>
<keyword id="KW-0991">Intellectual disability</keyword>
<keyword id="KW-0472">Membrane</keyword>
<keyword id="KW-0479">Metal-binding</keyword>
<keyword id="KW-0482">Metalloprotease</keyword>
<keyword id="KW-0550">Obesity</keyword>
<keyword id="KW-0645">Protease</keyword>
<keyword id="KW-1267">Proteomics identification</keyword>
<keyword id="KW-1185">Reference proteome</keyword>
<keyword id="KW-0964">Secreted</keyword>
<keyword id="KW-0732">Signal</keyword>
<keyword id="KW-0862">Zinc</keyword>
<keyword id="KW-0865">Zymogen</keyword>
<feature type="signal peptide" evidence="4">
    <location>
        <begin position="1"/>
        <end position="25"/>
    </location>
</feature>
<feature type="propeptide" id="PRO_0000004384" description="Activation peptide">
    <location>
        <begin position="26"/>
        <end position="42"/>
    </location>
</feature>
<feature type="chain" id="PRO_0000004385" description="Carboxypeptidase E">
    <location>
        <begin position="43"/>
        <end position="476"/>
    </location>
</feature>
<feature type="domain" description="Peptidase M14" evidence="5">
    <location>
        <begin position="52"/>
        <end position="372"/>
    </location>
</feature>
<feature type="active site" description="Proton donor/acceptor" evidence="5">
    <location>
        <position position="342"/>
    </location>
</feature>
<feature type="binding site" evidence="5">
    <location>
        <position position="114"/>
    </location>
    <ligand>
        <name>Zn(2+)</name>
        <dbReference type="ChEBI" id="CHEBI:29105"/>
        <note>catalytic</note>
    </ligand>
</feature>
<feature type="binding site" evidence="5">
    <location>
        <position position="117"/>
    </location>
    <ligand>
        <name>Zn(2+)</name>
        <dbReference type="ChEBI" id="CHEBI:29105"/>
        <note>catalytic</note>
    </ligand>
</feature>
<feature type="binding site" evidence="5">
    <location>
        <position position="248"/>
    </location>
    <ligand>
        <name>Zn(2+)</name>
        <dbReference type="ChEBI" id="CHEBI:29105"/>
        <note>catalytic</note>
    </ligand>
</feature>
<feature type="glycosylation site" description="N-linked (GlcNAc...) asparagine" evidence="4">
    <location>
        <position position="139"/>
    </location>
</feature>
<feature type="glycosylation site" description="N-linked (GlcNAc...) asparagine" evidence="4">
    <location>
        <position position="390"/>
    </location>
</feature>
<feature type="splice variant" id="VSP_040959" description="In isoform 2." evidence="9">
    <location>
        <begin position="1"/>
        <end position="36"/>
    </location>
</feature>
<feature type="sequence variant" id="VAR_085993" description="In BDVS." evidence="8">
    <location>
        <begin position="121"/>
        <end position="476"/>
    </location>
</feature>
<feature type="sequence variant" id="VAR_085994" description="In BDVS." evidence="7">
    <location>
        <begin position="135"/>
        <end position="476"/>
    </location>
</feature>
<feature type="sequence variant" id="VAR_048599" description="In dbSNP:rs34516004.">
    <original>W</original>
    <variation>R</variation>
    <location>
        <position position="235"/>
    </location>
</feature>
<feature type="sequence variant" id="VAR_036011" description="In a colorectal cancer sample; somatic mutation; dbSNP:rs541147146." evidence="6">
    <original>R</original>
    <variation>Q</variation>
    <location>
        <position position="297"/>
    </location>
</feature>
<feature type="sequence conflict" description="In Ref. 3; BAG52254." evidence="10" ref="3">
    <original>S</original>
    <variation>P</variation>
    <location>
        <position position="287"/>
    </location>
</feature>
<feature type="sequence conflict" description="In Ref. 2; BAA86053." evidence="10" ref="2">
    <original>A</original>
    <variation>R</variation>
    <location>
        <position position="391"/>
    </location>
</feature>
<proteinExistence type="evidence at protein level"/>
<dbReference type="EC" id="3.4.17.10"/>
<dbReference type="EMBL" id="X51405">
    <property type="protein sequence ID" value="CAA35767.1"/>
    <property type="molecule type" value="mRNA"/>
</dbReference>
<dbReference type="EMBL" id="AB006898">
    <property type="protein sequence ID" value="BAA86053.1"/>
    <property type="molecule type" value="Genomic_DNA"/>
</dbReference>
<dbReference type="EMBL" id="AK090962">
    <property type="protein sequence ID" value="BAG52254.1"/>
    <property type="status" value="ALT_FRAME"/>
    <property type="molecule type" value="mRNA"/>
</dbReference>
<dbReference type="EMBL" id="AK290996">
    <property type="protein sequence ID" value="BAF83685.1"/>
    <property type="molecule type" value="mRNA"/>
</dbReference>
<dbReference type="EMBL" id="AK294175">
    <property type="protein sequence ID" value="BAG57495.1"/>
    <property type="molecule type" value="mRNA"/>
</dbReference>
<dbReference type="EMBL" id="CH471056">
    <property type="protein sequence ID" value="EAX04817.1"/>
    <property type="molecule type" value="Genomic_DNA"/>
</dbReference>
<dbReference type="EMBL" id="CH471056">
    <property type="protein sequence ID" value="EAX04818.1"/>
    <property type="molecule type" value="Genomic_DNA"/>
</dbReference>
<dbReference type="EMBL" id="BC033866">
    <property type="protein sequence ID" value="AAH33866.1"/>
    <property type="molecule type" value="mRNA"/>
</dbReference>
<dbReference type="EMBL" id="BC053612">
    <property type="protein sequence ID" value="AAH53612.1"/>
    <property type="molecule type" value="mRNA"/>
</dbReference>
<dbReference type="CCDS" id="CCDS3810.1">
    <molecule id="P16870-1"/>
</dbReference>
<dbReference type="PIR" id="S09489">
    <property type="entry name" value="S09489"/>
</dbReference>
<dbReference type="RefSeq" id="NP_001864.1">
    <molecule id="P16870-1"/>
    <property type="nucleotide sequence ID" value="NM_001873.4"/>
</dbReference>
<dbReference type="SMR" id="P16870"/>
<dbReference type="BioGRID" id="107755">
    <property type="interactions" value="44"/>
</dbReference>
<dbReference type="CORUM" id="P16870"/>
<dbReference type="FunCoup" id="P16870">
    <property type="interactions" value="872"/>
</dbReference>
<dbReference type="IntAct" id="P16870">
    <property type="interactions" value="45"/>
</dbReference>
<dbReference type="MINT" id="P16870"/>
<dbReference type="STRING" id="9606.ENSP00000386104"/>
<dbReference type="DrugBank" id="DB00030">
    <property type="generic name" value="Insulin human"/>
</dbReference>
<dbReference type="DrugBank" id="DB14487">
    <property type="generic name" value="Zinc acetate"/>
</dbReference>
<dbReference type="DrugBank" id="DB14533">
    <property type="generic name" value="Zinc chloride"/>
</dbReference>
<dbReference type="DrugBank" id="DB14548">
    <property type="generic name" value="Zinc sulfate, unspecified form"/>
</dbReference>
<dbReference type="MEROPS" id="M14.005"/>
<dbReference type="GlyConnect" id="1067">
    <property type="glycosylation" value="1 N-Linked glycan (1 site)"/>
</dbReference>
<dbReference type="GlyCosmos" id="P16870">
    <property type="glycosylation" value="2 sites, 6 glycans"/>
</dbReference>
<dbReference type="GlyGen" id="P16870">
    <property type="glycosylation" value="4 sites, 21 N-linked glycans (2 sites), 1 O-linked glycan (2 sites)"/>
</dbReference>
<dbReference type="iPTMnet" id="P16870"/>
<dbReference type="PhosphoSitePlus" id="P16870"/>
<dbReference type="BioMuta" id="CPE"/>
<dbReference type="DMDM" id="115892"/>
<dbReference type="CPTAC" id="CPTAC-1486"/>
<dbReference type="jPOST" id="P16870"/>
<dbReference type="MassIVE" id="P16870"/>
<dbReference type="PaxDb" id="9606-ENSP00000386104"/>
<dbReference type="PeptideAtlas" id="P16870"/>
<dbReference type="PRIDE" id="P16870"/>
<dbReference type="ProteomicsDB" id="53394">
    <molecule id="P16870-1"/>
</dbReference>
<dbReference type="ProteomicsDB" id="53395">
    <molecule id="P16870-2"/>
</dbReference>
<dbReference type="Pumba" id="P16870"/>
<dbReference type="Antibodypedia" id="16998">
    <property type="antibodies" value="351 antibodies from 36 providers"/>
</dbReference>
<dbReference type="DNASU" id="1363"/>
<dbReference type="Ensembl" id="ENST00000402744.9">
    <molecule id="P16870-1"/>
    <property type="protein sequence ID" value="ENSP00000386104.4"/>
    <property type="gene ID" value="ENSG00000109472.14"/>
</dbReference>
<dbReference type="GeneID" id="1363"/>
<dbReference type="KEGG" id="hsa:1363"/>
<dbReference type="MANE-Select" id="ENST00000402744.9">
    <property type="protein sequence ID" value="ENSP00000386104.4"/>
    <property type="RefSeq nucleotide sequence ID" value="NM_001873.4"/>
    <property type="RefSeq protein sequence ID" value="NP_001864.1"/>
</dbReference>
<dbReference type="UCSC" id="uc003irg.5">
    <molecule id="P16870-1"/>
    <property type="organism name" value="human"/>
</dbReference>
<dbReference type="AGR" id="HGNC:2303"/>
<dbReference type="CTD" id="1363"/>
<dbReference type="DisGeNET" id="1363"/>
<dbReference type="GeneCards" id="CPE"/>
<dbReference type="HGNC" id="HGNC:2303">
    <property type="gene designation" value="CPE"/>
</dbReference>
<dbReference type="HPA" id="ENSG00000109472">
    <property type="expression patterns" value="Tissue enhanced (brain, retina)"/>
</dbReference>
<dbReference type="MalaCards" id="CPE"/>
<dbReference type="MIM" id="114855">
    <property type="type" value="gene"/>
</dbReference>
<dbReference type="MIM" id="619326">
    <property type="type" value="phenotype"/>
</dbReference>
<dbReference type="neXtProt" id="NX_P16870"/>
<dbReference type="OpenTargets" id="ENSG00000109472"/>
<dbReference type="Orphanet" id="633028">
    <property type="disease" value="CPE-related Prader-Willi-like syndrome"/>
</dbReference>
<dbReference type="PharmGKB" id="PA26824"/>
<dbReference type="VEuPathDB" id="HostDB:ENSG00000109472"/>
<dbReference type="eggNOG" id="KOG2649">
    <property type="taxonomic scope" value="Eukaryota"/>
</dbReference>
<dbReference type="GeneTree" id="ENSGT00940000157158"/>
<dbReference type="HOGENOM" id="CLU_006722_1_3_1"/>
<dbReference type="InParanoid" id="P16870"/>
<dbReference type="OMA" id="FEYHRYA"/>
<dbReference type="OrthoDB" id="10249045at2759"/>
<dbReference type="PAN-GO" id="P16870">
    <property type="GO annotations" value="4 GO annotations based on evolutionary models"/>
</dbReference>
<dbReference type="PhylomeDB" id="P16870"/>
<dbReference type="TreeFam" id="TF315592"/>
<dbReference type="BRENDA" id="3.4.17.10">
    <property type="organism ID" value="2681"/>
</dbReference>
<dbReference type="PathwayCommons" id="P16870"/>
<dbReference type="Reactome" id="R-HSA-264876">
    <property type="pathway name" value="Insulin processing"/>
</dbReference>
<dbReference type="SignaLink" id="P16870"/>
<dbReference type="SIGNOR" id="P16870"/>
<dbReference type="BioGRID-ORCS" id="1363">
    <property type="hits" value="16 hits in 1165 CRISPR screens"/>
</dbReference>
<dbReference type="ChiTaRS" id="CPE">
    <property type="organism name" value="human"/>
</dbReference>
<dbReference type="GeneWiki" id="Carboxypeptidase_E"/>
<dbReference type="GenomeRNAi" id="1363"/>
<dbReference type="Pharos" id="P16870">
    <property type="development level" value="Tbio"/>
</dbReference>
<dbReference type="PRO" id="PR:P16870"/>
<dbReference type="Proteomes" id="UP000005640">
    <property type="component" value="Chromosome 4"/>
</dbReference>
<dbReference type="RNAct" id="P16870">
    <property type="molecule type" value="protein"/>
</dbReference>
<dbReference type="Bgee" id="ENSG00000109472">
    <property type="expression patterns" value="Expressed in type B pancreatic cell and 204 other cell types or tissues"/>
</dbReference>
<dbReference type="ExpressionAtlas" id="P16870">
    <property type="expression patterns" value="baseline and differential"/>
</dbReference>
<dbReference type="GO" id="GO:0070062">
    <property type="term" value="C:extracellular exosome"/>
    <property type="evidence" value="ECO:0007005"/>
    <property type="project" value="UniProtKB"/>
</dbReference>
<dbReference type="GO" id="GO:0005615">
    <property type="term" value="C:extracellular space"/>
    <property type="evidence" value="ECO:0000318"/>
    <property type="project" value="GO_Central"/>
</dbReference>
<dbReference type="GO" id="GO:0005794">
    <property type="term" value="C:Golgi apparatus"/>
    <property type="evidence" value="ECO:0000314"/>
    <property type="project" value="BHF-UCL"/>
</dbReference>
<dbReference type="GO" id="GO:0005886">
    <property type="term" value="C:plasma membrane"/>
    <property type="evidence" value="ECO:0000304"/>
    <property type="project" value="ProtInc"/>
</dbReference>
<dbReference type="GO" id="GO:0030667">
    <property type="term" value="C:secretory granule membrane"/>
    <property type="evidence" value="ECO:0007669"/>
    <property type="project" value="Ensembl"/>
</dbReference>
<dbReference type="GO" id="GO:0030658">
    <property type="term" value="C:transport vesicle membrane"/>
    <property type="evidence" value="ECO:0007669"/>
    <property type="project" value="UniProtKB-SubCell"/>
</dbReference>
<dbReference type="GO" id="GO:0004180">
    <property type="term" value="F:carboxypeptidase activity"/>
    <property type="evidence" value="ECO:0000304"/>
    <property type="project" value="ProtInc"/>
</dbReference>
<dbReference type="GO" id="GO:0050839">
    <property type="term" value="F:cell adhesion molecule binding"/>
    <property type="evidence" value="ECO:0000353"/>
    <property type="project" value="BHF-UCL"/>
</dbReference>
<dbReference type="GO" id="GO:0004181">
    <property type="term" value="F:metallocarboxypeptidase activity"/>
    <property type="evidence" value="ECO:0000318"/>
    <property type="project" value="GO_Central"/>
</dbReference>
<dbReference type="GO" id="GO:0042043">
    <property type="term" value="F:neurexin family protein binding"/>
    <property type="evidence" value="ECO:0000353"/>
    <property type="project" value="BHF-UCL"/>
</dbReference>
<dbReference type="GO" id="GO:0008270">
    <property type="term" value="F:zinc ion binding"/>
    <property type="evidence" value="ECO:0007669"/>
    <property type="project" value="InterPro"/>
</dbReference>
<dbReference type="GO" id="GO:0003214">
    <property type="term" value="P:cardiac left ventricle morphogenesis"/>
    <property type="evidence" value="ECO:0000315"/>
    <property type="project" value="BHF-UCL"/>
</dbReference>
<dbReference type="GO" id="GO:0030070">
    <property type="term" value="P:insulin processing"/>
    <property type="evidence" value="ECO:0007669"/>
    <property type="project" value="Ensembl"/>
</dbReference>
<dbReference type="GO" id="GO:0007218">
    <property type="term" value="P:neuropeptide signaling pathway"/>
    <property type="evidence" value="ECO:0000303"/>
    <property type="project" value="UniProtKB"/>
</dbReference>
<dbReference type="GO" id="GO:0030072">
    <property type="term" value="P:peptide hormone secretion"/>
    <property type="evidence" value="ECO:0007669"/>
    <property type="project" value="Ensembl"/>
</dbReference>
<dbReference type="GO" id="GO:0006518">
    <property type="term" value="P:peptide metabolic process"/>
    <property type="evidence" value="ECO:0000318"/>
    <property type="project" value="GO_Central"/>
</dbReference>
<dbReference type="GO" id="GO:0072657">
    <property type="term" value="P:protein localization to membrane"/>
    <property type="evidence" value="ECO:0000314"/>
    <property type="project" value="BHF-UCL"/>
</dbReference>
<dbReference type="GO" id="GO:0033366">
    <property type="term" value="P:protein localization to secretory granule"/>
    <property type="evidence" value="ECO:0007669"/>
    <property type="project" value="Ensembl"/>
</dbReference>
<dbReference type="GO" id="GO:0036211">
    <property type="term" value="P:protein modification process"/>
    <property type="evidence" value="ECO:0000303"/>
    <property type="project" value="UniProtKB"/>
</dbReference>
<dbReference type="GO" id="GO:0016485">
    <property type="term" value="P:protein processing"/>
    <property type="evidence" value="ECO:0000318"/>
    <property type="project" value="GO_Central"/>
</dbReference>
<dbReference type="GO" id="GO:0016055">
    <property type="term" value="P:Wnt signaling pathway"/>
    <property type="evidence" value="ECO:0000314"/>
    <property type="project" value="CACAO"/>
</dbReference>
<dbReference type="CDD" id="cd03865">
    <property type="entry name" value="M14_CPE"/>
    <property type="match status" value="1"/>
</dbReference>
<dbReference type="CDD" id="cd11308">
    <property type="entry name" value="Peptidase_M14NE-CP-C_like"/>
    <property type="match status" value="1"/>
</dbReference>
<dbReference type="FunFam" id="2.60.40.1120:FF:000004">
    <property type="entry name" value="Carboxypeptidase E"/>
    <property type="match status" value="1"/>
</dbReference>
<dbReference type="FunFam" id="3.40.630.10:FF:000013">
    <property type="entry name" value="carboxypeptidase N catalytic chain"/>
    <property type="match status" value="1"/>
</dbReference>
<dbReference type="Gene3D" id="2.60.40.1120">
    <property type="entry name" value="Carboxypeptidase-like, regulatory domain"/>
    <property type="match status" value="1"/>
</dbReference>
<dbReference type="Gene3D" id="3.40.630.10">
    <property type="entry name" value="Zn peptidases"/>
    <property type="match status" value="1"/>
</dbReference>
<dbReference type="InterPro" id="IPR008969">
    <property type="entry name" value="CarboxyPept-like_regulatory"/>
</dbReference>
<dbReference type="InterPro" id="IPR034232">
    <property type="entry name" value="M14_CPE_CPD"/>
</dbReference>
<dbReference type="InterPro" id="IPR000834">
    <property type="entry name" value="Peptidase_M14"/>
</dbReference>
<dbReference type="InterPro" id="IPR050753">
    <property type="entry name" value="Peptidase_M14_domain"/>
</dbReference>
<dbReference type="PANTHER" id="PTHR11532:SF92">
    <property type="entry name" value="CARBOXYPEPTIDASE E"/>
    <property type="match status" value="1"/>
</dbReference>
<dbReference type="PANTHER" id="PTHR11532">
    <property type="entry name" value="PROTEASE M14 CARBOXYPEPTIDASE"/>
    <property type="match status" value="1"/>
</dbReference>
<dbReference type="Pfam" id="PF13620">
    <property type="entry name" value="CarboxypepD_reg"/>
    <property type="match status" value="1"/>
</dbReference>
<dbReference type="Pfam" id="PF00246">
    <property type="entry name" value="Peptidase_M14"/>
    <property type="match status" value="1"/>
</dbReference>
<dbReference type="PRINTS" id="PR00765">
    <property type="entry name" value="CRBOXYPTASEA"/>
</dbReference>
<dbReference type="SMART" id="SM00631">
    <property type="entry name" value="Zn_pept"/>
    <property type="match status" value="1"/>
</dbReference>
<dbReference type="SUPFAM" id="SSF49464">
    <property type="entry name" value="Carboxypeptidase regulatory domain-like"/>
    <property type="match status" value="1"/>
</dbReference>
<dbReference type="SUPFAM" id="SSF53187">
    <property type="entry name" value="Zn-dependent exopeptidases"/>
    <property type="match status" value="1"/>
</dbReference>
<dbReference type="PROSITE" id="PS00132">
    <property type="entry name" value="CARBOXYPEPT_ZN_1"/>
    <property type="match status" value="1"/>
</dbReference>
<dbReference type="PROSITE" id="PS00133">
    <property type="entry name" value="CARBOXYPEPT_ZN_2"/>
    <property type="match status" value="1"/>
</dbReference>
<dbReference type="PROSITE" id="PS52035">
    <property type="entry name" value="PEPTIDASE_M14"/>
    <property type="match status" value="1"/>
</dbReference>
<reference key="1">
    <citation type="journal article" date="1990" name="Biochem. J.">
        <title>Human carboxypeptidase E. Isolation and characterization of the cDNA, sequence conservation, expression and processing in vitro.</title>
        <authorList>
            <person name="Manser E."/>
            <person name="Fernandez D."/>
            <person name="Loo L."/>
            <person name="Goh P.Y."/>
            <person name="Monfries C."/>
            <person name="Hall C."/>
            <person name="Lim L."/>
        </authorList>
    </citation>
    <scope>NUCLEOTIDE SEQUENCE [MRNA] (ISOFORM 1)</scope>
    <source>
        <tissue>Brain</tissue>
    </source>
</reference>
<reference key="2">
    <citation type="journal article" date="1998" name="Diabetologia">
        <title>Organization of the human carboxypeptidase E gene and molecular scanning for mutations in Japanese subjects with NIDDM or obesity.</title>
        <authorList>
            <person name="Utsunomiya N."/>
            <person name="Ohagi S."/>
            <person name="Sanke T."/>
            <person name="Tatsuta H."/>
            <person name="Hanabusa T."/>
            <person name="Nanjo K."/>
        </authorList>
    </citation>
    <scope>NUCLEOTIDE SEQUENCE [GENOMIC DNA]</scope>
</reference>
<reference key="3">
    <citation type="journal article" date="2004" name="Nat. Genet.">
        <title>Complete sequencing and characterization of 21,243 full-length human cDNAs.</title>
        <authorList>
            <person name="Ota T."/>
            <person name="Suzuki Y."/>
            <person name="Nishikawa T."/>
            <person name="Otsuki T."/>
            <person name="Sugiyama T."/>
            <person name="Irie R."/>
            <person name="Wakamatsu A."/>
            <person name="Hayashi K."/>
            <person name="Sato H."/>
            <person name="Nagai K."/>
            <person name="Kimura K."/>
            <person name="Makita H."/>
            <person name="Sekine M."/>
            <person name="Obayashi M."/>
            <person name="Nishi T."/>
            <person name="Shibahara T."/>
            <person name="Tanaka T."/>
            <person name="Ishii S."/>
            <person name="Yamamoto J."/>
            <person name="Saito K."/>
            <person name="Kawai Y."/>
            <person name="Isono Y."/>
            <person name="Nakamura Y."/>
            <person name="Nagahari K."/>
            <person name="Murakami K."/>
            <person name="Yasuda T."/>
            <person name="Iwayanagi T."/>
            <person name="Wagatsuma M."/>
            <person name="Shiratori A."/>
            <person name="Sudo H."/>
            <person name="Hosoiri T."/>
            <person name="Kaku Y."/>
            <person name="Kodaira H."/>
            <person name="Kondo H."/>
            <person name="Sugawara M."/>
            <person name="Takahashi M."/>
            <person name="Kanda K."/>
            <person name="Yokoi T."/>
            <person name="Furuya T."/>
            <person name="Kikkawa E."/>
            <person name="Omura Y."/>
            <person name="Abe K."/>
            <person name="Kamihara K."/>
            <person name="Katsuta N."/>
            <person name="Sato K."/>
            <person name="Tanikawa M."/>
            <person name="Yamazaki M."/>
            <person name="Ninomiya K."/>
            <person name="Ishibashi T."/>
            <person name="Yamashita H."/>
            <person name="Murakawa K."/>
            <person name="Fujimori K."/>
            <person name="Tanai H."/>
            <person name="Kimata M."/>
            <person name="Watanabe M."/>
            <person name="Hiraoka S."/>
            <person name="Chiba Y."/>
            <person name="Ishida S."/>
            <person name="Ono Y."/>
            <person name="Takiguchi S."/>
            <person name="Watanabe S."/>
            <person name="Yosida M."/>
            <person name="Hotuta T."/>
            <person name="Kusano J."/>
            <person name="Kanehori K."/>
            <person name="Takahashi-Fujii A."/>
            <person name="Hara H."/>
            <person name="Tanase T.-O."/>
            <person name="Nomura Y."/>
            <person name="Togiya S."/>
            <person name="Komai F."/>
            <person name="Hara R."/>
            <person name="Takeuchi K."/>
            <person name="Arita M."/>
            <person name="Imose N."/>
            <person name="Musashino K."/>
            <person name="Yuuki H."/>
            <person name="Oshima A."/>
            <person name="Sasaki N."/>
            <person name="Aotsuka S."/>
            <person name="Yoshikawa Y."/>
            <person name="Matsunawa H."/>
            <person name="Ichihara T."/>
            <person name="Shiohata N."/>
            <person name="Sano S."/>
            <person name="Moriya S."/>
            <person name="Momiyama H."/>
            <person name="Satoh N."/>
            <person name="Takami S."/>
            <person name="Terashima Y."/>
            <person name="Suzuki O."/>
            <person name="Nakagawa S."/>
            <person name="Senoh A."/>
            <person name="Mizoguchi H."/>
            <person name="Goto Y."/>
            <person name="Shimizu F."/>
            <person name="Wakebe H."/>
            <person name="Hishigaki H."/>
            <person name="Watanabe T."/>
            <person name="Sugiyama A."/>
            <person name="Takemoto M."/>
            <person name="Kawakami B."/>
            <person name="Yamazaki M."/>
            <person name="Watanabe K."/>
            <person name="Kumagai A."/>
            <person name="Itakura S."/>
            <person name="Fukuzumi Y."/>
            <person name="Fujimori Y."/>
            <person name="Komiyama M."/>
            <person name="Tashiro H."/>
            <person name="Tanigami A."/>
            <person name="Fujiwara T."/>
            <person name="Ono T."/>
            <person name="Yamada K."/>
            <person name="Fujii Y."/>
            <person name="Ozaki K."/>
            <person name="Hirao M."/>
            <person name="Ohmori Y."/>
            <person name="Kawabata A."/>
            <person name="Hikiji T."/>
            <person name="Kobatake N."/>
            <person name="Inagaki H."/>
            <person name="Ikema Y."/>
            <person name="Okamoto S."/>
            <person name="Okitani R."/>
            <person name="Kawakami T."/>
            <person name="Noguchi S."/>
            <person name="Itoh T."/>
            <person name="Shigeta K."/>
            <person name="Senba T."/>
            <person name="Matsumura K."/>
            <person name="Nakajima Y."/>
            <person name="Mizuno T."/>
            <person name="Morinaga M."/>
            <person name="Sasaki M."/>
            <person name="Togashi T."/>
            <person name="Oyama M."/>
            <person name="Hata H."/>
            <person name="Watanabe M."/>
            <person name="Komatsu T."/>
            <person name="Mizushima-Sugano J."/>
            <person name="Satoh T."/>
            <person name="Shirai Y."/>
            <person name="Takahashi Y."/>
            <person name="Nakagawa K."/>
            <person name="Okumura K."/>
            <person name="Nagase T."/>
            <person name="Nomura N."/>
            <person name="Kikuchi H."/>
            <person name="Masuho Y."/>
            <person name="Yamashita R."/>
            <person name="Nakai K."/>
            <person name="Yada T."/>
            <person name="Nakamura Y."/>
            <person name="Ohara O."/>
            <person name="Isogai T."/>
            <person name="Sugano S."/>
        </authorList>
    </citation>
    <scope>NUCLEOTIDE SEQUENCE [LARGE SCALE MRNA] (ISOFORMS 1 AND 2)</scope>
    <source>
        <tissue>Amygdala</tissue>
        <tissue>Teratocarcinoma</tissue>
    </source>
</reference>
<reference key="4">
    <citation type="submission" date="2005-09" db="EMBL/GenBank/DDBJ databases">
        <authorList>
            <person name="Mural R.J."/>
            <person name="Istrail S."/>
            <person name="Sutton G.G."/>
            <person name="Florea L."/>
            <person name="Halpern A.L."/>
            <person name="Mobarry C.M."/>
            <person name="Lippert R."/>
            <person name="Walenz B."/>
            <person name="Shatkay H."/>
            <person name="Dew I."/>
            <person name="Miller J.R."/>
            <person name="Flanigan M.J."/>
            <person name="Edwards N.J."/>
            <person name="Bolanos R."/>
            <person name="Fasulo D."/>
            <person name="Halldorsson B.V."/>
            <person name="Hannenhalli S."/>
            <person name="Turner R."/>
            <person name="Yooseph S."/>
            <person name="Lu F."/>
            <person name="Nusskern D.R."/>
            <person name="Shue B.C."/>
            <person name="Zheng X.H."/>
            <person name="Zhong F."/>
            <person name="Delcher A.L."/>
            <person name="Huson D.H."/>
            <person name="Kravitz S.A."/>
            <person name="Mouchard L."/>
            <person name="Reinert K."/>
            <person name="Remington K.A."/>
            <person name="Clark A.G."/>
            <person name="Waterman M.S."/>
            <person name="Eichler E.E."/>
            <person name="Adams M.D."/>
            <person name="Hunkapiller M.W."/>
            <person name="Myers E.W."/>
            <person name="Venter J.C."/>
        </authorList>
    </citation>
    <scope>NUCLEOTIDE SEQUENCE [LARGE SCALE GENOMIC DNA]</scope>
</reference>
<reference key="5">
    <citation type="journal article" date="2004" name="Genome Res.">
        <title>The status, quality, and expansion of the NIH full-length cDNA project: the Mammalian Gene Collection (MGC).</title>
        <authorList>
            <consortium name="The MGC Project Team"/>
        </authorList>
    </citation>
    <scope>NUCLEOTIDE SEQUENCE [LARGE SCALE MRNA] (ISOFORM 1)</scope>
    <source>
        <tissue>Colon</tissue>
        <tissue>Eye</tissue>
    </source>
</reference>
<reference key="6">
    <citation type="journal article" date="2011" name="J. Clin. Invest.">
        <title>An N-terminal truncated carboxypeptidase E splice isoform induces tumor growth and is a biomarker for predicting future metastasis in human cancers.</title>
        <authorList>
            <person name="Lee T.K."/>
            <person name="Murthy S.R."/>
            <person name="Cawley N.X."/>
            <person name="Dhanvantari S."/>
            <person name="Hewitt S.M."/>
            <person name="Lou H."/>
            <person name="Lau T."/>
            <person name="Ma S."/>
            <person name="Huynh T."/>
            <person name="Wesley R.A."/>
            <person name="Ng I.O."/>
            <person name="Pacak K."/>
            <person name="Poon R.T."/>
            <person name="Loh Y.P."/>
        </authorList>
    </citation>
    <scope>RETRACTED PAPER</scope>
</reference>
<reference key="7">
    <citation type="journal article" date="2019" name="J. Clin. Invest.">
        <authorList>
            <person name="Lee T.K."/>
            <person name="Murthy S.R."/>
            <person name="Cawley N.X."/>
            <person name="Dhanvantari S."/>
            <person name="Hewitt S.M."/>
            <person name="Lou H."/>
            <person name="Lau T."/>
            <person name="Ma S."/>
            <person name="Huynh T."/>
            <person name="Wesley R.A."/>
            <person name="Ng I.O."/>
            <person name="Pacak K."/>
            <person name="Poon R.T."/>
            <person name="Loh Y.P."/>
        </authorList>
    </citation>
    <scope>RETRACTION NOTICE OF PUBMED:21285511</scope>
</reference>
<reference key="8">
    <citation type="journal article" date="2021" name="J. Clin. Endocrinol. Metab.">
        <title>BDV syndrome: An emerging syndrome with profound obesity and neurodevelopmental delay resembling Prader-Willi syndrome.</title>
        <authorList>
            <person name="Bosch E."/>
            <person name="Hebebrand M."/>
            <person name="Popp B."/>
            <person name="Penger T."/>
            <person name="Behring B."/>
            <person name="Cox H."/>
            <person name="Towner S."/>
            <person name="Kraus C."/>
            <person name="Wilson W.G."/>
            <person name="Khan S."/>
            <person name="Krumbiegel M."/>
            <person name="Ekici A.B."/>
            <person name="Uebe S."/>
            <person name="Trollmann R."/>
            <person name="Woelfle J."/>
            <person name="Reis A."/>
            <person name="Vasileiou G."/>
        </authorList>
    </citation>
    <scope>INVOLVEMENT IN BDVS</scope>
    <scope>VARIANT BDVS 121-ARG--PHE-476 DEL</scope>
</reference>
<reference key="9">
    <citation type="journal article" date="2021" name="J. Clin. Res. Pediatr. Endocrinol.">
        <title>A new cause of obesity syndrome associated with a mutation in the carboxypeptidase gene detected in three siblings with obesity, intellectual disability and hypogonadotropic hypogonadism.</title>
        <authorList>
            <person name="Durmaz A."/>
            <person name="Aykut A."/>
            <person name="Atik T."/>
            <person name="Oezen S."/>
            <person name="Ayyildiz Emecen D."/>
            <person name="Ata A."/>
            <person name="Isik E."/>
            <person name="Goeksen D."/>
            <person name="Cogulu O."/>
            <person name="Oezkinay F."/>
        </authorList>
    </citation>
    <scope>VARIANT BDVS 135-TYR--PHE-476 DEL</scope>
</reference>
<reference key="10">
    <citation type="journal article" date="2006" name="Science">
        <title>The consensus coding sequences of human breast and colorectal cancers.</title>
        <authorList>
            <person name="Sjoeblom T."/>
            <person name="Jones S."/>
            <person name="Wood L.D."/>
            <person name="Parsons D.W."/>
            <person name="Lin J."/>
            <person name="Barber T.D."/>
            <person name="Mandelker D."/>
            <person name="Leary R.J."/>
            <person name="Ptak J."/>
            <person name="Silliman N."/>
            <person name="Szabo S."/>
            <person name="Buckhaults P."/>
            <person name="Farrell C."/>
            <person name="Meeh P."/>
            <person name="Markowitz S.D."/>
            <person name="Willis J."/>
            <person name="Dawson D."/>
            <person name="Willson J.K.V."/>
            <person name="Gazdar A.F."/>
            <person name="Hartigan J."/>
            <person name="Wu L."/>
            <person name="Liu C."/>
            <person name="Parmigiani G."/>
            <person name="Park B.H."/>
            <person name="Bachman K.E."/>
            <person name="Papadopoulos N."/>
            <person name="Vogelstein B."/>
            <person name="Kinzler K.W."/>
            <person name="Velculescu V.E."/>
        </authorList>
    </citation>
    <scope>VARIANT [LARGE SCALE ANALYSIS] GLN-297</scope>
</reference>
<evidence type="ECO:0000250" key="1">
    <source>
        <dbReference type="UniProtKB" id="P00730"/>
    </source>
</evidence>
<evidence type="ECO:0000250" key="2">
    <source>
        <dbReference type="UniProtKB" id="P15087"/>
    </source>
</evidence>
<evidence type="ECO:0000250" key="3">
    <source>
        <dbReference type="UniProtKB" id="Q00493"/>
    </source>
</evidence>
<evidence type="ECO:0000255" key="4"/>
<evidence type="ECO:0000255" key="5">
    <source>
        <dbReference type="PROSITE-ProRule" id="PRU01379"/>
    </source>
</evidence>
<evidence type="ECO:0000269" key="6">
    <source>
    </source>
</evidence>
<evidence type="ECO:0000269" key="7">
    <source>
    </source>
</evidence>
<evidence type="ECO:0000269" key="8">
    <source>
    </source>
</evidence>
<evidence type="ECO:0000303" key="9">
    <source>
    </source>
</evidence>
<evidence type="ECO:0000305" key="10"/>
<evidence type="ECO:0000305" key="11">
    <source>
    </source>
</evidence>
<evidence type="ECO:0000305" key="12">
    <source>
    </source>
</evidence>
<protein>
    <recommendedName>
        <fullName>Carboxypeptidase E</fullName>
        <shortName>CPE</shortName>
        <ecNumber>3.4.17.10</ecNumber>
    </recommendedName>
    <alternativeName>
        <fullName>Carboxypeptidase H</fullName>
        <shortName>CPH</shortName>
    </alternativeName>
    <alternativeName>
        <fullName>Enkephalin convertase</fullName>
    </alternativeName>
    <alternativeName>
        <fullName>Prohormone-processing carboxypeptidase</fullName>
    </alternativeName>
</protein>
<comment type="function">
    <text evidence="3">Sorting receptor that directs prohormones to the regulated secretory pathway. Also acts as a prohormone processing enzyme in neuro/endocrine cells, removing dibasic residues from the C-terminal end of peptide hormone precursors after initial endoprotease cleavage.</text>
</comment>
<comment type="catalytic activity">
    <reaction>
        <text>Release of C-terminal arginine or lysine residues from polypeptides.</text>
        <dbReference type="EC" id="3.4.17.10"/>
    </reaction>
</comment>
<comment type="cofactor">
    <cofactor evidence="1">
        <name>Zn(2+)</name>
        <dbReference type="ChEBI" id="CHEBI:29105"/>
    </cofactor>
    <text evidence="1">Binds 1 zinc ion per subunit.</text>
</comment>
<comment type="subunit">
    <text evidence="3">Interacts with secretogranin III/SCG3.</text>
</comment>
<comment type="interaction">
    <interactant intactId="EBI-711320">
        <id>P16870</id>
    </interactant>
    <interactant intactId="EBI-11047108">
        <id>P49768-2</id>
        <label>PSEN1</label>
    </interactant>
    <organismsDiffer>false</organismsDiffer>
    <experiments>3</experiments>
</comment>
<comment type="subcellular location">
    <molecule>Isoform 1</molecule>
    <subcellularLocation>
        <location evidence="3">Cytoplasmic vesicle</location>
        <location evidence="3">Secretory vesicle</location>
    </subcellularLocation>
    <subcellularLocation>
        <location evidence="2">Cytoplasmic vesicle</location>
        <location evidence="2">Secretory vesicle membrane</location>
        <topology evidence="2">Peripheral membrane protein</topology>
    </subcellularLocation>
    <subcellularLocation>
        <location evidence="2">Secreted</location>
    </subcellularLocation>
    <text evidence="3">Associated with the secretory granule membrane through direct binding to lipid rafts in intragranular conditions.</text>
</comment>
<comment type="alternative products">
    <event type="alternative splicing"/>
    <isoform>
        <id>P16870-1</id>
        <name>1</name>
        <sequence type="displayed"/>
    </isoform>
    <isoform>
        <id>P16870-2</id>
        <name>2</name>
        <name>CPE delta-N</name>
        <sequence type="described" ref="VSP_040959"/>
    </isoform>
</comment>
<comment type="disease" evidence="7 8">
    <disease id="DI-06110">
        <name>BDV syndrome</name>
        <acronym>BDVS</acronym>
        <description>An autosomal recessive disorder characterized by obesity, intellectual disability, and hypogonadotropic hypogonadism. Additional variable features include central hypothyroidism, hypotonia, and developmental delay.</description>
        <dbReference type="MIM" id="619326"/>
    </disease>
    <text>The disease is caused by variants affecting the gene represented in this entry.</text>
</comment>
<comment type="similarity">
    <text evidence="10">Belongs to the peptidase M14 family.</text>
</comment>
<comment type="caution">
    <text evidence="11 12">Isoform 2 was reported to be located in the nucleus and to interact with HDAC1 and HDAC2 (PubMed:21285511). However, this work was later retracted (PubMed:30882370).</text>
</comment>
<comment type="sequence caution" evidence="10">
    <conflict type="frameshift">
        <sequence resource="EMBL-CDS" id="BAG52254"/>
    </conflict>
</comment>
<sequence length="476" mass="53151">MAGRGGSALLALCGALAACGWLLGAEAQEPGAPAAGMRRRRRLQQEDGISFEYHRYPELREALVSVWLQCTAISRIYTVGRSFEGRELLVIELSDNPGVHEPGEPEFKYIGNMHGNEAVGRELLIFLAQYLCNEYQKGNETIVNLIHSTRIHIMPSLNPDGFEKAASQPGELKDWFVGRSNAQGIDLNRNFPDLDRIVYVNEKEGGPNNHLLKNMKKIVDQNTKLAPETKAVIHWIMDIPFVLSANLHGGDLVANYPYDETRSGSAHEYSSSPDDAIFQSLARAYSSFNPAMSDPNRPPCRKNDDDSSFVDGTTNGGAWYSVPGGMQDFNYLSSNCFEITVELSCEKFPPEETLKTYWEDNKNSLISYLEQIHRGVKGFVRDLQGNPIANATISVEGIDHDVTSAKDGDYWRLLIPGNYKLTASAPGYLAITKKVAVPYSPAAGVDFELESFSERKEEEKEELMEWWKMMSETLNF</sequence>
<organism>
    <name type="scientific">Homo sapiens</name>
    <name type="common">Human</name>
    <dbReference type="NCBI Taxonomy" id="9606"/>
    <lineage>
        <taxon>Eukaryota</taxon>
        <taxon>Metazoa</taxon>
        <taxon>Chordata</taxon>
        <taxon>Craniata</taxon>
        <taxon>Vertebrata</taxon>
        <taxon>Euteleostomi</taxon>
        <taxon>Mammalia</taxon>
        <taxon>Eutheria</taxon>
        <taxon>Euarchontoglires</taxon>
        <taxon>Primates</taxon>
        <taxon>Haplorrhini</taxon>
        <taxon>Catarrhini</taxon>
        <taxon>Hominidae</taxon>
        <taxon>Homo</taxon>
    </lineage>
</organism>